<evidence type="ECO:0000250" key="1"/>
<evidence type="ECO:0000255" key="2">
    <source>
        <dbReference type="PROSITE-ProRule" id="PRU10095"/>
    </source>
</evidence>
<evidence type="ECO:0000256" key="3">
    <source>
        <dbReference type="SAM" id="MobiDB-lite"/>
    </source>
</evidence>
<evidence type="ECO:0000305" key="4"/>
<sequence>MAEAASSGSNSTSPPKDNGYIPGDDAWTICRNLWRGLTGKMTQEGMEQFRVARDVRNEKEDCKRCEDQRDYLLQYSPLIRFLQDNIQQLGGNISKHNIFCRRCKNRQAGGFDPDYGIQICANEMRNQGHLEDTLAHEMIHAYDHMRFKVDWDDNLRHAACAEIRASNLSGECRWMREFFSRGQWKFAQHHQECVRRRAILSVQARPACKDEQHATQVVNEVWDSCFRDTRPFDEIYR</sequence>
<dbReference type="EC" id="3.4.24.-"/>
<dbReference type="EMBL" id="GG704911">
    <property type="protein sequence ID" value="EAS35599.3"/>
    <property type="molecule type" value="Genomic_DNA"/>
</dbReference>
<dbReference type="RefSeq" id="XP_001247182.1">
    <property type="nucleotide sequence ID" value="XM_001247181.2"/>
</dbReference>
<dbReference type="FunCoup" id="Q1E910">
    <property type="interactions" value="481"/>
</dbReference>
<dbReference type="STRING" id="246410.Q1E910"/>
<dbReference type="MEROPS" id="M76.001"/>
<dbReference type="MEROPS" id="M76.002"/>
<dbReference type="GeneID" id="4566975"/>
<dbReference type="KEGG" id="cim:CIMG_00953"/>
<dbReference type="VEuPathDB" id="FungiDB:CIMG_00953"/>
<dbReference type="InParanoid" id="Q1E910"/>
<dbReference type="OMA" id="EAHQNCV"/>
<dbReference type="OrthoDB" id="285308at2759"/>
<dbReference type="Proteomes" id="UP000001261">
    <property type="component" value="Unassembled WGS sequence"/>
</dbReference>
<dbReference type="GO" id="GO:0005743">
    <property type="term" value="C:mitochondrial inner membrane"/>
    <property type="evidence" value="ECO:0007669"/>
    <property type="project" value="UniProtKB-SubCell"/>
</dbReference>
<dbReference type="GO" id="GO:0046872">
    <property type="term" value="F:metal ion binding"/>
    <property type="evidence" value="ECO:0007669"/>
    <property type="project" value="UniProtKB-KW"/>
</dbReference>
<dbReference type="GO" id="GO:0004222">
    <property type="term" value="F:metalloendopeptidase activity"/>
    <property type="evidence" value="ECO:0007669"/>
    <property type="project" value="InterPro"/>
</dbReference>
<dbReference type="GO" id="GO:0034982">
    <property type="term" value="P:mitochondrial protein processing"/>
    <property type="evidence" value="ECO:0007669"/>
    <property type="project" value="TreeGrafter"/>
</dbReference>
<dbReference type="GO" id="GO:0033615">
    <property type="term" value="P:mitochondrial proton-transporting ATP synthase complex assembly"/>
    <property type="evidence" value="ECO:0007669"/>
    <property type="project" value="TreeGrafter"/>
</dbReference>
<dbReference type="InterPro" id="IPR019165">
    <property type="entry name" value="Peptidase_M76_ATP23"/>
</dbReference>
<dbReference type="PANTHER" id="PTHR21711">
    <property type="entry name" value="MITOCHONDRIAL INNER MEMBRANE PROTEASE"/>
    <property type="match status" value="1"/>
</dbReference>
<dbReference type="PANTHER" id="PTHR21711:SF0">
    <property type="entry name" value="MITOCHONDRIAL INNER MEMBRANE PROTEASE ATP23 HOMOLOG"/>
    <property type="match status" value="1"/>
</dbReference>
<dbReference type="Pfam" id="PF09768">
    <property type="entry name" value="Peptidase_M76"/>
    <property type="match status" value="1"/>
</dbReference>
<dbReference type="PROSITE" id="PS00142">
    <property type="entry name" value="ZINC_PROTEASE"/>
    <property type="match status" value="1"/>
</dbReference>
<organism>
    <name type="scientific">Coccidioides immitis (strain RS)</name>
    <name type="common">Valley fever fungus</name>
    <dbReference type="NCBI Taxonomy" id="246410"/>
    <lineage>
        <taxon>Eukaryota</taxon>
        <taxon>Fungi</taxon>
        <taxon>Dikarya</taxon>
        <taxon>Ascomycota</taxon>
        <taxon>Pezizomycotina</taxon>
        <taxon>Eurotiomycetes</taxon>
        <taxon>Eurotiomycetidae</taxon>
        <taxon>Onygenales</taxon>
        <taxon>Onygenaceae</taxon>
        <taxon>Coccidioides</taxon>
    </lineage>
</organism>
<accession>Q1E910</accession>
<accession>J3KI86</accession>
<comment type="function">
    <text evidence="1">Has a dual role in the assembly of mitochondrial ATPase. Acts as a protease that removes N-terminal residues of mitochondrial ATPase CF(0) subunit 6 at the intermembrane space side. Also involved in the correct assembly of the membrane-embedded ATPase CF(0) particle, probably mediating association of subunit 6 with the subunit 9 ring (By similarity).</text>
</comment>
<comment type="subcellular location">
    <subcellularLocation>
        <location>Mitochondrion inner membrane</location>
        <topology>Peripheral membrane protein</topology>
        <orientation>Intermembrane side</orientation>
    </subcellularLocation>
    <text evidence="1">Associates loosely with the inner membrane.</text>
</comment>
<comment type="similarity">
    <text evidence="4">Belongs to the peptidase M76 family.</text>
</comment>
<proteinExistence type="inferred from homology"/>
<gene>
    <name type="primary">ATP23</name>
    <name type="ORF">CIMG_00953</name>
</gene>
<protein>
    <recommendedName>
        <fullName>Mitochondrial inner membrane protease ATP23</fullName>
        <ecNumber>3.4.24.-</ecNumber>
    </recommendedName>
</protein>
<name>ATP23_COCIM</name>
<keyword id="KW-0378">Hydrolase</keyword>
<keyword id="KW-0472">Membrane</keyword>
<keyword id="KW-0479">Metal-binding</keyword>
<keyword id="KW-0482">Metalloprotease</keyword>
<keyword id="KW-0496">Mitochondrion</keyword>
<keyword id="KW-0999">Mitochondrion inner membrane</keyword>
<keyword id="KW-0645">Protease</keyword>
<keyword id="KW-1185">Reference proteome</keyword>
<feature type="chain" id="PRO_0000330060" description="Mitochondrial inner membrane protease ATP23">
    <location>
        <begin position="1"/>
        <end position="237"/>
    </location>
</feature>
<feature type="region of interest" description="Disordered" evidence="3">
    <location>
        <begin position="1"/>
        <end position="20"/>
    </location>
</feature>
<feature type="compositionally biased region" description="Polar residues" evidence="3">
    <location>
        <begin position="1"/>
        <end position="15"/>
    </location>
</feature>
<feature type="active site" evidence="2">
    <location>
        <position position="137"/>
    </location>
</feature>
<feature type="binding site" evidence="1">
    <location>
        <position position="136"/>
    </location>
    <ligand>
        <name>a divalent metal cation</name>
        <dbReference type="ChEBI" id="CHEBI:60240"/>
        <note>catalytic</note>
    </ligand>
</feature>
<feature type="binding site" evidence="1">
    <location>
        <position position="140"/>
    </location>
    <ligand>
        <name>a divalent metal cation</name>
        <dbReference type="ChEBI" id="CHEBI:60240"/>
        <note>catalytic</note>
    </ligand>
</feature>
<reference key="1">
    <citation type="journal article" date="2009" name="Genome Res.">
        <title>Comparative genomic analyses of the human fungal pathogens Coccidioides and their relatives.</title>
        <authorList>
            <person name="Sharpton T.J."/>
            <person name="Stajich J.E."/>
            <person name="Rounsley S.D."/>
            <person name="Gardner M.J."/>
            <person name="Wortman J.R."/>
            <person name="Jordar V.S."/>
            <person name="Maiti R."/>
            <person name="Kodira C.D."/>
            <person name="Neafsey D.E."/>
            <person name="Zeng Q."/>
            <person name="Hung C.-Y."/>
            <person name="McMahan C."/>
            <person name="Muszewska A."/>
            <person name="Grynberg M."/>
            <person name="Mandel M.A."/>
            <person name="Kellner E.M."/>
            <person name="Barker B.M."/>
            <person name="Galgiani J.N."/>
            <person name="Orbach M.J."/>
            <person name="Kirkland T.N."/>
            <person name="Cole G.T."/>
            <person name="Henn M.R."/>
            <person name="Birren B.W."/>
            <person name="Taylor J.W."/>
        </authorList>
    </citation>
    <scope>NUCLEOTIDE SEQUENCE [LARGE SCALE GENOMIC DNA]</scope>
    <source>
        <strain>RS</strain>
    </source>
</reference>
<reference key="2">
    <citation type="journal article" date="2010" name="Genome Res.">
        <title>Population genomic sequencing of Coccidioides fungi reveals recent hybridization and transposon control.</title>
        <authorList>
            <person name="Neafsey D.E."/>
            <person name="Barker B.M."/>
            <person name="Sharpton T.J."/>
            <person name="Stajich J.E."/>
            <person name="Park D.J."/>
            <person name="Whiston E."/>
            <person name="Hung C.-Y."/>
            <person name="McMahan C."/>
            <person name="White J."/>
            <person name="Sykes S."/>
            <person name="Heiman D."/>
            <person name="Young S."/>
            <person name="Zeng Q."/>
            <person name="Abouelleil A."/>
            <person name="Aftuck L."/>
            <person name="Bessette D."/>
            <person name="Brown A."/>
            <person name="FitzGerald M."/>
            <person name="Lui A."/>
            <person name="Macdonald J.P."/>
            <person name="Priest M."/>
            <person name="Orbach M.J."/>
            <person name="Galgiani J.N."/>
            <person name="Kirkland T.N."/>
            <person name="Cole G.T."/>
            <person name="Birren B.W."/>
            <person name="Henn M.R."/>
            <person name="Taylor J.W."/>
            <person name="Rounsley S.D."/>
        </authorList>
    </citation>
    <scope>GENOME REANNOTATION</scope>
    <source>
        <strain>RS</strain>
    </source>
</reference>